<dbReference type="EMBL" id="AB083066">
    <property type="protein sequence ID" value="BAC06589.1"/>
    <property type="molecule type" value="mRNA"/>
</dbReference>
<dbReference type="EMBL" id="BC037473">
    <property type="protein sequence ID" value="AAH37473.1"/>
    <property type="molecule type" value="mRNA"/>
</dbReference>
<dbReference type="EMBL" id="BC064473">
    <property type="protein sequence ID" value="AAH64473.1"/>
    <property type="molecule type" value="mRNA"/>
</dbReference>
<dbReference type="EMBL" id="AK044977">
    <property type="protein sequence ID" value="BAC32167.1"/>
    <property type="status" value="ALT_INIT"/>
    <property type="molecule type" value="mRNA"/>
</dbReference>
<dbReference type="CCDS" id="CCDS19248.1"/>
<dbReference type="RefSeq" id="NP_666032.1">
    <property type="nucleotide sequence ID" value="NM_145920.3"/>
</dbReference>
<dbReference type="SMR" id="Q8K1G2"/>
<dbReference type="CORUM" id="Q8K1G2"/>
<dbReference type="FunCoup" id="Q8K1G2">
    <property type="interactions" value="191"/>
</dbReference>
<dbReference type="STRING" id="10090.ENSMUSP00000055130"/>
<dbReference type="GlyCosmos" id="Q8K1G2">
    <property type="glycosylation" value="3 sites, No reported glycans"/>
</dbReference>
<dbReference type="GlyGen" id="Q8K1G2">
    <property type="glycosylation" value="5 sites, 2 N-linked glycans (4 sites)"/>
</dbReference>
<dbReference type="iPTMnet" id="Q8K1G2"/>
<dbReference type="PhosphoSitePlus" id="Q8K1G2"/>
<dbReference type="jPOST" id="Q8K1G2"/>
<dbReference type="PaxDb" id="10090-ENSMUSP00000055130"/>
<dbReference type="ProteomicsDB" id="290011"/>
<dbReference type="Pumba" id="Q8K1G2"/>
<dbReference type="Antibodypedia" id="22606">
    <property type="antibodies" value="126 antibodies from 29 providers"/>
</dbReference>
<dbReference type="DNASU" id="68525"/>
<dbReference type="Ensembl" id="ENSMUST00000056365.9">
    <property type="protein sequence ID" value="ENSMUSP00000055130.9"/>
    <property type="gene ID" value="ENSMUSG00000050248.12"/>
</dbReference>
<dbReference type="GeneID" id="68525"/>
<dbReference type="KEGG" id="mmu:68525"/>
<dbReference type="UCSC" id="uc008xfr.2">
    <property type="organism name" value="mouse"/>
</dbReference>
<dbReference type="AGR" id="MGI:1915775"/>
<dbReference type="CTD" id="132884"/>
<dbReference type="MGI" id="MGI:1915775">
    <property type="gene designation" value="Evc2"/>
</dbReference>
<dbReference type="VEuPathDB" id="HostDB:ENSMUSG00000050248"/>
<dbReference type="eggNOG" id="ENOG502QQ5U">
    <property type="taxonomic scope" value="Eukaryota"/>
</dbReference>
<dbReference type="GeneTree" id="ENSGT00940000154127"/>
<dbReference type="HOGENOM" id="CLU_007621_0_0_1"/>
<dbReference type="InParanoid" id="Q8K1G2"/>
<dbReference type="OMA" id="IFFAQIK"/>
<dbReference type="OrthoDB" id="8852462at2759"/>
<dbReference type="PhylomeDB" id="Q8K1G2"/>
<dbReference type="TreeFam" id="TF331379"/>
<dbReference type="Reactome" id="R-MMU-5632684">
    <property type="pathway name" value="Hedgehog 'on' state"/>
</dbReference>
<dbReference type="BioGRID-ORCS" id="68525">
    <property type="hits" value="4 hits in 78 CRISPR screens"/>
</dbReference>
<dbReference type="ChiTaRS" id="Evc2">
    <property type="organism name" value="mouse"/>
</dbReference>
<dbReference type="PRO" id="PR:Q8K1G2"/>
<dbReference type="Proteomes" id="UP000000589">
    <property type="component" value="Chromosome 5"/>
</dbReference>
<dbReference type="RNAct" id="Q8K1G2">
    <property type="molecule type" value="protein"/>
</dbReference>
<dbReference type="Bgee" id="ENSMUSG00000050248">
    <property type="expression patterns" value="Expressed in humerus cartilage element and 169 other cell types or tissues"/>
</dbReference>
<dbReference type="GO" id="GO:0060170">
    <property type="term" value="C:ciliary membrane"/>
    <property type="evidence" value="ECO:0000314"/>
    <property type="project" value="UniProtKB"/>
</dbReference>
<dbReference type="GO" id="GO:0005929">
    <property type="term" value="C:cilium"/>
    <property type="evidence" value="ECO:0000314"/>
    <property type="project" value="UniProtKB"/>
</dbReference>
<dbReference type="GO" id="GO:0005737">
    <property type="term" value="C:cytoplasm"/>
    <property type="evidence" value="ECO:0007669"/>
    <property type="project" value="UniProtKB-KW"/>
</dbReference>
<dbReference type="GO" id="GO:0005856">
    <property type="term" value="C:cytoskeleton"/>
    <property type="evidence" value="ECO:0007669"/>
    <property type="project" value="UniProtKB-KW"/>
</dbReference>
<dbReference type="GO" id="GO:0005634">
    <property type="term" value="C:nucleus"/>
    <property type="evidence" value="ECO:0000314"/>
    <property type="project" value="UniProtKB"/>
</dbReference>
<dbReference type="GO" id="GO:0098797">
    <property type="term" value="C:plasma membrane protein complex"/>
    <property type="evidence" value="ECO:0000314"/>
    <property type="project" value="UniProtKB"/>
</dbReference>
<dbReference type="GO" id="GO:0007224">
    <property type="term" value="P:smoothened signaling pathway"/>
    <property type="evidence" value="ECO:0000315"/>
    <property type="project" value="UniProtKB"/>
</dbReference>
<dbReference type="InterPro" id="IPR022076">
    <property type="entry name" value="Limbin"/>
</dbReference>
<dbReference type="InterPro" id="IPR026501">
    <property type="entry name" value="Limbin/EVC"/>
</dbReference>
<dbReference type="PANTHER" id="PTHR16795:SF14">
    <property type="entry name" value="LIMBIN"/>
    <property type="match status" value="1"/>
</dbReference>
<dbReference type="PANTHER" id="PTHR16795">
    <property type="entry name" value="LIMBIN/ELLIS-VAN CREVELD PROTEIN"/>
    <property type="match status" value="1"/>
</dbReference>
<dbReference type="Pfam" id="PF12297">
    <property type="entry name" value="EVC2_like"/>
    <property type="match status" value="1"/>
</dbReference>
<accession>Q8K1G2</accession>
<accession>Q8BRF3</accession>
<feature type="signal peptide" evidence="1">
    <location>
        <begin position="1"/>
        <end position="29"/>
    </location>
</feature>
<feature type="chain" id="PRO_0000084364" description="Limbin">
    <location>
        <begin position="30"/>
        <end position="1220"/>
    </location>
</feature>
<feature type="topological domain" description="Extracellular" evidence="1">
    <location>
        <begin position="30"/>
        <end position="210"/>
    </location>
</feature>
<feature type="transmembrane region" description="Helical" evidence="1">
    <location>
        <begin position="211"/>
        <end position="231"/>
    </location>
</feature>
<feature type="topological domain" description="Cytoplasmic" evidence="1">
    <location>
        <begin position="232"/>
        <end position="1220"/>
    </location>
</feature>
<feature type="region of interest" description="Disordered" evidence="2">
    <location>
        <begin position="38"/>
        <end position="59"/>
    </location>
</feature>
<feature type="coiled-coil region" evidence="1">
    <location>
        <begin position="355"/>
        <end position="404"/>
    </location>
</feature>
<feature type="coiled-coil region" evidence="1">
    <location>
        <begin position="563"/>
        <end position="644"/>
    </location>
</feature>
<feature type="coiled-coil region" evidence="1">
    <location>
        <begin position="854"/>
        <end position="875"/>
    </location>
</feature>
<feature type="coiled-coil region" evidence="1">
    <location>
        <begin position="920"/>
        <end position="1005"/>
    </location>
</feature>
<feature type="glycosylation site" description="N-linked (GlcNAc...) asparagine" evidence="1">
    <location>
        <position position="100"/>
    </location>
</feature>
<feature type="glycosylation site" description="N-linked (GlcNAc...) asparagine" evidence="1">
    <location>
        <position position="109"/>
    </location>
</feature>
<feature type="glycosylation site" description="N-linked (GlcNAc...) asparagine" evidence="4">
    <location>
        <position position="130"/>
    </location>
</feature>
<feature type="mutagenesis site" description="Inhibits interaction with EFCAB7." evidence="6">
    <original>FVFR</original>
    <variation>AAAA</variation>
    <location>
        <begin position="1185"/>
        <end position="1188"/>
    </location>
</feature>
<reference key="1">
    <citation type="journal article" date="2002" name="Proc. Natl. Acad. Sci. U.S.A.">
        <title>Positional cloning of the gene LIMBIN responsible for bovine chondrodysplastic dwarfism.</title>
        <authorList>
            <person name="Takeda H."/>
            <person name="Takami M."/>
            <person name="Oguni T."/>
            <person name="Tsuji T."/>
            <person name="Yoneda K."/>
            <person name="Sato H."/>
            <person name="Ihara N."/>
            <person name="Itoh T."/>
            <person name="Kata S.R."/>
            <person name="Mishina Y."/>
            <person name="Womack J.E."/>
            <person name="Moritomo Y."/>
            <person name="Sugimoto Y."/>
            <person name="Kunieda T."/>
        </authorList>
    </citation>
    <scope>NUCLEOTIDE SEQUENCE [MRNA]</scope>
    <scope>TISSUE SPECIFICITY</scope>
    <source>
        <tissue>Limb bud</tissue>
    </source>
</reference>
<reference key="2">
    <citation type="journal article" date="2004" name="Genome Res.">
        <title>The status, quality, and expansion of the NIH full-length cDNA project: the Mammalian Gene Collection (MGC).</title>
        <authorList>
            <consortium name="The MGC Project Team"/>
        </authorList>
    </citation>
    <scope>NUCLEOTIDE SEQUENCE [LARGE SCALE MRNA]</scope>
    <source>
        <strain>FVB/N</strain>
        <tissue>Kidney</tissue>
        <tissue>Mammary gland</tissue>
    </source>
</reference>
<reference key="3">
    <citation type="journal article" date="2005" name="Science">
        <title>The transcriptional landscape of the mammalian genome.</title>
        <authorList>
            <person name="Carninci P."/>
            <person name="Kasukawa T."/>
            <person name="Katayama S."/>
            <person name="Gough J."/>
            <person name="Frith M.C."/>
            <person name="Maeda N."/>
            <person name="Oyama R."/>
            <person name="Ravasi T."/>
            <person name="Lenhard B."/>
            <person name="Wells C."/>
            <person name="Kodzius R."/>
            <person name="Shimokawa K."/>
            <person name="Bajic V.B."/>
            <person name="Brenner S.E."/>
            <person name="Batalov S."/>
            <person name="Forrest A.R."/>
            <person name="Zavolan M."/>
            <person name="Davis M.J."/>
            <person name="Wilming L.G."/>
            <person name="Aidinis V."/>
            <person name="Allen J.E."/>
            <person name="Ambesi-Impiombato A."/>
            <person name="Apweiler R."/>
            <person name="Aturaliya R.N."/>
            <person name="Bailey T.L."/>
            <person name="Bansal M."/>
            <person name="Baxter L."/>
            <person name="Beisel K.W."/>
            <person name="Bersano T."/>
            <person name="Bono H."/>
            <person name="Chalk A.M."/>
            <person name="Chiu K.P."/>
            <person name="Choudhary V."/>
            <person name="Christoffels A."/>
            <person name="Clutterbuck D.R."/>
            <person name="Crowe M.L."/>
            <person name="Dalla E."/>
            <person name="Dalrymple B.P."/>
            <person name="de Bono B."/>
            <person name="Della Gatta G."/>
            <person name="di Bernardo D."/>
            <person name="Down T."/>
            <person name="Engstrom P."/>
            <person name="Fagiolini M."/>
            <person name="Faulkner G."/>
            <person name="Fletcher C.F."/>
            <person name="Fukushima T."/>
            <person name="Furuno M."/>
            <person name="Futaki S."/>
            <person name="Gariboldi M."/>
            <person name="Georgii-Hemming P."/>
            <person name="Gingeras T.R."/>
            <person name="Gojobori T."/>
            <person name="Green R.E."/>
            <person name="Gustincich S."/>
            <person name="Harbers M."/>
            <person name="Hayashi Y."/>
            <person name="Hensch T.K."/>
            <person name="Hirokawa N."/>
            <person name="Hill D."/>
            <person name="Huminiecki L."/>
            <person name="Iacono M."/>
            <person name="Ikeo K."/>
            <person name="Iwama A."/>
            <person name="Ishikawa T."/>
            <person name="Jakt M."/>
            <person name="Kanapin A."/>
            <person name="Katoh M."/>
            <person name="Kawasawa Y."/>
            <person name="Kelso J."/>
            <person name="Kitamura H."/>
            <person name="Kitano H."/>
            <person name="Kollias G."/>
            <person name="Krishnan S.P."/>
            <person name="Kruger A."/>
            <person name="Kummerfeld S.K."/>
            <person name="Kurochkin I.V."/>
            <person name="Lareau L.F."/>
            <person name="Lazarevic D."/>
            <person name="Lipovich L."/>
            <person name="Liu J."/>
            <person name="Liuni S."/>
            <person name="McWilliam S."/>
            <person name="Madan Babu M."/>
            <person name="Madera M."/>
            <person name="Marchionni L."/>
            <person name="Matsuda H."/>
            <person name="Matsuzawa S."/>
            <person name="Miki H."/>
            <person name="Mignone F."/>
            <person name="Miyake S."/>
            <person name="Morris K."/>
            <person name="Mottagui-Tabar S."/>
            <person name="Mulder N."/>
            <person name="Nakano N."/>
            <person name="Nakauchi H."/>
            <person name="Ng P."/>
            <person name="Nilsson R."/>
            <person name="Nishiguchi S."/>
            <person name="Nishikawa S."/>
            <person name="Nori F."/>
            <person name="Ohara O."/>
            <person name="Okazaki Y."/>
            <person name="Orlando V."/>
            <person name="Pang K.C."/>
            <person name="Pavan W.J."/>
            <person name="Pavesi G."/>
            <person name="Pesole G."/>
            <person name="Petrovsky N."/>
            <person name="Piazza S."/>
            <person name="Reed J."/>
            <person name="Reid J.F."/>
            <person name="Ring B.Z."/>
            <person name="Ringwald M."/>
            <person name="Rost B."/>
            <person name="Ruan Y."/>
            <person name="Salzberg S.L."/>
            <person name="Sandelin A."/>
            <person name="Schneider C."/>
            <person name="Schoenbach C."/>
            <person name="Sekiguchi K."/>
            <person name="Semple C.A."/>
            <person name="Seno S."/>
            <person name="Sessa L."/>
            <person name="Sheng Y."/>
            <person name="Shibata Y."/>
            <person name="Shimada H."/>
            <person name="Shimada K."/>
            <person name="Silva D."/>
            <person name="Sinclair B."/>
            <person name="Sperling S."/>
            <person name="Stupka E."/>
            <person name="Sugiura K."/>
            <person name="Sultana R."/>
            <person name="Takenaka Y."/>
            <person name="Taki K."/>
            <person name="Tammoja K."/>
            <person name="Tan S.L."/>
            <person name="Tang S."/>
            <person name="Taylor M.S."/>
            <person name="Tegner J."/>
            <person name="Teichmann S.A."/>
            <person name="Ueda H.R."/>
            <person name="van Nimwegen E."/>
            <person name="Verardo R."/>
            <person name="Wei C.L."/>
            <person name="Yagi K."/>
            <person name="Yamanishi H."/>
            <person name="Zabarovsky E."/>
            <person name="Zhu S."/>
            <person name="Zimmer A."/>
            <person name="Hide W."/>
            <person name="Bult C."/>
            <person name="Grimmond S.M."/>
            <person name="Teasdale R.D."/>
            <person name="Liu E.T."/>
            <person name="Brusic V."/>
            <person name="Quackenbush J."/>
            <person name="Wahlestedt C."/>
            <person name="Mattick J.S."/>
            <person name="Hume D.A."/>
            <person name="Kai C."/>
            <person name="Sasaki D."/>
            <person name="Tomaru Y."/>
            <person name="Fukuda S."/>
            <person name="Kanamori-Katayama M."/>
            <person name="Suzuki M."/>
            <person name="Aoki J."/>
            <person name="Arakawa T."/>
            <person name="Iida J."/>
            <person name="Imamura K."/>
            <person name="Itoh M."/>
            <person name="Kato T."/>
            <person name="Kawaji H."/>
            <person name="Kawagashira N."/>
            <person name="Kawashima T."/>
            <person name="Kojima M."/>
            <person name="Kondo S."/>
            <person name="Konno H."/>
            <person name="Nakano K."/>
            <person name="Ninomiya N."/>
            <person name="Nishio T."/>
            <person name="Okada M."/>
            <person name="Plessy C."/>
            <person name="Shibata K."/>
            <person name="Shiraki T."/>
            <person name="Suzuki S."/>
            <person name="Tagami M."/>
            <person name="Waki K."/>
            <person name="Watahiki A."/>
            <person name="Okamura-Oho Y."/>
            <person name="Suzuki H."/>
            <person name="Kawai J."/>
            <person name="Hayashizaki Y."/>
        </authorList>
    </citation>
    <scope>NUCLEOTIDE SEQUENCE [LARGE SCALE MRNA] OF 21-744</scope>
    <source>
        <strain>C57BL/6J</strain>
    </source>
</reference>
<reference key="4">
    <citation type="journal article" date="2009" name="Nat. Biotechnol.">
        <title>Mass-spectrometric identification and relative quantification of N-linked cell surface glycoproteins.</title>
        <authorList>
            <person name="Wollscheid B."/>
            <person name="Bausch-Fluck D."/>
            <person name="Henderson C."/>
            <person name="O'Brien R."/>
            <person name="Bibel M."/>
            <person name="Schiess R."/>
            <person name="Aebersold R."/>
            <person name="Watts J.D."/>
        </authorList>
    </citation>
    <scope>GLYCOSYLATION [LARGE SCALE ANALYSIS] AT ASN-130</scope>
</reference>
<reference key="5">
    <citation type="journal article" date="2011" name="BMC Biol.">
        <title>Evc2 is a positive modulator of Hedgehog signalling that interacts with Evc at the cilia membrane and is also found in the nucleus.</title>
        <authorList>
            <person name="Blair H.J."/>
            <person name="Tompson S."/>
            <person name="Liu Y.N."/>
            <person name="Campbell J."/>
            <person name="MacArthur K."/>
            <person name="Ponting C.P."/>
            <person name="Ruiz-Perez V.L."/>
            <person name="Goodship J.A."/>
        </authorList>
    </citation>
    <scope>FUNCTION</scope>
    <scope>SUBCELLULAR LOCATION</scope>
    <scope>TOPOLOGY</scope>
    <scope>INTERACTION WITH EVC</scope>
</reference>
<reference key="6">
    <citation type="journal article" date="2014" name="Dev. Cell">
        <title>EFCAB7 and IQCE regulate hedgehog signaling by tethering the EVC-EVC2 complex to the base of primary cilia.</title>
        <authorList>
            <person name="Pusapati G.V."/>
            <person name="Hughes C.E."/>
            <person name="Dorn K.V."/>
            <person name="Zhang D."/>
            <person name="Sugianto P."/>
            <person name="Aravind L."/>
            <person name="Rohatgi R."/>
        </authorList>
    </citation>
    <scope>FUNCTION</scope>
    <scope>IDENTIFICATION IN THE EVC COMPLEX</scope>
    <scope>INTERACTION WITH EFCAB7; EVC AND IQCE</scope>
    <scope>SUBCELLULAR LOCATION</scope>
    <scope>MUTAGENESIS OF 1185-PHE--ARG-1188</scope>
</reference>
<name>LBN_MOUSE</name>
<organism>
    <name type="scientific">Mus musculus</name>
    <name type="common">Mouse</name>
    <dbReference type="NCBI Taxonomy" id="10090"/>
    <lineage>
        <taxon>Eukaryota</taxon>
        <taxon>Metazoa</taxon>
        <taxon>Chordata</taxon>
        <taxon>Craniata</taxon>
        <taxon>Vertebrata</taxon>
        <taxon>Euteleostomi</taxon>
        <taxon>Mammalia</taxon>
        <taxon>Eutheria</taxon>
        <taxon>Euarchontoglires</taxon>
        <taxon>Glires</taxon>
        <taxon>Rodentia</taxon>
        <taxon>Myomorpha</taxon>
        <taxon>Muroidea</taxon>
        <taxon>Muridae</taxon>
        <taxon>Murinae</taxon>
        <taxon>Mus</taxon>
        <taxon>Mus</taxon>
    </lineage>
</organism>
<protein>
    <recommendedName>
        <fullName>Limbin</fullName>
    </recommendedName>
</protein>
<comment type="function">
    <text evidence="5 6">Component of the EvC complex that positively regulates ciliary Hedgehog (Hh) signaling (PubMed:21356043, PubMed:24582806). Plays a critical role in bone formation and skeletal development (PubMed:21356043). May be involved in early embryonic morphogenesis (PubMed:21356043).</text>
</comment>
<comment type="subunit">
    <text evidence="6">Component of the EvC complex composed of EFCAB7, IQCE, EVC2 and EVC; built from two subcomplexes, EVC2:EVC and EFCAB7:IQCE (PubMed:24582806). Interacts with EVC (PubMed:21356043, PubMed:24582806). Interacts (via N-terminal end) with EFCAB7 (PubMed:24582806). Interacts (via N-terminal end) with IQCE (PubMed:24582806).</text>
</comment>
<comment type="subcellular location">
    <subcellularLocation>
        <location evidence="5">Cell membrane</location>
        <topology evidence="5">Single-pass type I membrane protein</topology>
    </subcellularLocation>
    <subcellularLocation>
        <location evidence="5">Cytoplasm</location>
        <location evidence="5">Cytoskeleton</location>
        <location evidence="5">Cilium basal body</location>
    </subcellularLocation>
    <subcellularLocation>
        <location evidence="5">Cell projection</location>
        <location evidence="5">Cilium</location>
    </subcellularLocation>
    <subcellularLocation>
        <location evidence="5 6">Cell projection</location>
        <location evidence="5 6">Cilium membrane</location>
    </subcellularLocation>
    <subcellularLocation>
        <location evidence="5">Nucleus</location>
    </subcellularLocation>
    <text evidence="6">The EvC complex localizes at the base of cilia in the EvC zone of primary cilia in a EFCAB7-dependent manner (PubMed:24582806).</text>
</comment>
<comment type="tissue specificity">
    <text evidence="3">Expressed in long and cranial bones, kidney and heart. Strongly expressed in proliferating chondrocytes, osteoblasts and osteoclasts.</text>
</comment>
<comment type="developmental stage">
    <text>Found in the embryo at day 7 dpc, 11 dpc, 15 dpc, and 17 dpc. At the limb bud formation stage 11 dpc, it is expressed in fore- and hindlimb buds, branchial arches, and facial primordia.</text>
</comment>
<comment type="sequence caution" evidence="7">
    <conflict type="erroneous initiation">
        <sequence resource="EMBL-CDS" id="BAC32167"/>
    </conflict>
</comment>
<sequence>MGATGPTGAGGRATWVLAGNILAAALVLGSGPRALPPSFPALGPGSPSRPGPAGPWASSQYSDISREARGPFENGVIFQKCSLVSGQSESQTMHVQLSVNNTRTPTSVNLSNLLVLDEITGLAVKESPGNNTQDGIQTFRKSFLQVGECYSVSYTASLDPTALGTGESLDLPARLIFQSPSQNRTQLKAPFTITVEEKIMVLPNHGLHAAGFIAAFLISLLLTVAALFFLARGRCLQGGMLSRCRIQHPENKLEPSPFTSANGVSQDLSLNDQVVAILTSEEPGSMLQALEELEIATLNQADADLEACRNQISKDIIALLMKNLVSGGHLSPQTERKMAAAFKKQFLLLENEIQEEYERKMLALTAECDLEMRKKTENQYQREMVAMEEAEEVLKRVSERSAAECSSLLRTLHGLEQEDMQRSLTLDQAEDFAQAHRQLAVFQRNELHSIVYTQIQSAVSKGELRPEVAKMMLQDYSKTQESVEELMDFFQATKRYHLSKRFGHREYLVQRLQAMETRVQGLLNTAATQLTSLIHKHERAGYLDEDQMETLLERAQTETFSIKQKLDNDLKQEKKRLHQRLITRRRRELLQKHKEQQKEQVSLGEASSTAEDAVQYLHQWRSVMAEHTAALEELQERLDQAALDDLRVLTVSLSEKATEELRRLQSTAMTQELLKRSAPWLFLQQILEEHSRESAARTTQLEAEERERGQELVQGVRQRLQQDALEAYTEEQAELRHWEHLVFMKLCCAAISLSEEDLLRVRQEAQGCFSQLDRSLALPRVRARVLQQQAQMAWREAEFRKLDQALAAPELQSKARKLRSKGRGKADLLKKNLEDKIRLFEERAPVELADQVRGELLQERVQRLEAQEAHFAESLVALQFQKVARAAETLSVYTALLSIQDLLLGELSESETLTKSACVQILESHRPELQELQELERKLEDQLVQQEEAEQQRVLESWQRWAADGPGLSEPEEMDPERQVSAILRQALNKGQKLLEQHQQRVREEWQNGAVLEDSLESIEADTMASLCSQGLRLVSYLSRMTMVPGSTLLRLLSVVLPAASQPQLLALLDAVSEKHSDHTAENESSGEQAQAEQSKRRKHQVWWKVLDSRFRADLVSQGLERMLWARQKKERILKKIYVPVQERVMFPGKGSWPHLSLEPIGELAPIPITGADAMDILNTGEKIFVFRSPREPEISLRVPPRRKKNFLNAKKANRALGLD</sequence>
<proteinExistence type="evidence at protein level"/>
<evidence type="ECO:0000255" key="1"/>
<evidence type="ECO:0000256" key="2">
    <source>
        <dbReference type="SAM" id="MobiDB-lite"/>
    </source>
</evidence>
<evidence type="ECO:0000269" key="3">
    <source>
    </source>
</evidence>
<evidence type="ECO:0000269" key="4">
    <source>
    </source>
</evidence>
<evidence type="ECO:0000269" key="5">
    <source>
    </source>
</evidence>
<evidence type="ECO:0000269" key="6">
    <source>
    </source>
</evidence>
<evidence type="ECO:0000305" key="7"/>
<gene>
    <name type="primary">Evc2</name>
    <name type="synonym">Lbn</name>
</gene>
<keyword id="KW-1003">Cell membrane</keyword>
<keyword id="KW-0966">Cell projection</keyword>
<keyword id="KW-0969">Cilium</keyword>
<keyword id="KW-0175">Coiled coil</keyword>
<keyword id="KW-0963">Cytoplasm</keyword>
<keyword id="KW-0206">Cytoskeleton</keyword>
<keyword id="KW-0325">Glycoprotein</keyword>
<keyword id="KW-0472">Membrane</keyword>
<keyword id="KW-0539">Nucleus</keyword>
<keyword id="KW-1185">Reference proteome</keyword>
<keyword id="KW-0732">Signal</keyword>
<keyword id="KW-0812">Transmembrane</keyword>
<keyword id="KW-1133">Transmembrane helix</keyword>